<keyword id="KW-0963">Cytoplasm</keyword>
<keyword id="KW-0460">Magnesium</keyword>
<keyword id="KW-0479">Metal-binding</keyword>
<keyword id="KW-0548">Nucleotidyltransferase</keyword>
<keyword id="KW-1185">Reference proteome</keyword>
<keyword id="KW-0694">RNA-binding</keyword>
<keyword id="KW-0808">Transferase</keyword>
<evidence type="ECO:0000255" key="1">
    <source>
        <dbReference type="HAMAP-Rule" id="MF_01595"/>
    </source>
</evidence>
<evidence type="ECO:0000256" key="2">
    <source>
        <dbReference type="SAM" id="MobiDB-lite"/>
    </source>
</evidence>
<feature type="chain" id="PRO_0000329859" description="Polyribonucleotide nucleotidyltransferase">
    <location>
        <begin position="1"/>
        <end position="774"/>
    </location>
</feature>
<feature type="domain" description="KH" evidence="1">
    <location>
        <begin position="552"/>
        <end position="611"/>
    </location>
</feature>
<feature type="domain" description="S1 motif" evidence="1">
    <location>
        <begin position="621"/>
        <end position="689"/>
    </location>
</feature>
<feature type="region of interest" description="Disordered" evidence="2">
    <location>
        <begin position="689"/>
        <end position="774"/>
    </location>
</feature>
<feature type="compositionally biased region" description="Basic and acidic residues" evidence="2">
    <location>
        <begin position="700"/>
        <end position="755"/>
    </location>
</feature>
<feature type="binding site" evidence="1">
    <location>
        <position position="485"/>
    </location>
    <ligand>
        <name>Mg(2+)</name>
        <dbReference type="ChEBI" id="CHEBI:18420"/>
    </ligand>
</feature>
<feature type="binding site" evidence="1">
    <location>
        <position position="491"/>
    </location>
    <ligand>
        <name>Mg(2+)</name>
        <dbReference type="ChEBI" id="CHEBI:18420"/>
    </ligand>
</feature>
<comment type="function">
    <text evidence="1">Involved in mRNA degradation. Catalyzes the phosphorolysis of single-stranded polyribonucleotides processively in the 3'- to 5'-direction.</text>
</comment>
<comment type="catalytic activity">
    <reaction evidence="1">
        <text>RNA(n+1) + phosphate = RNA(n) + a ribonucleoside 5'-diphosphate</text>
        <dbReference type="Rhea" id="RHEA:22096"/>
        <dbReference type="Rhea" id="RHEA-COMP:14527"/>
        <dbReference type="Rhea" id="RHEA-COMP:17342"/>
        <dbReference type="ChEBI" id="CHEBI:43474"/>
        <dbReference type="ChEBI" id="CHEBI:57930"/>
        <dbReference type="ChEBI" id="CHEBI:140395"/>
        <dbReference type="EC" id="2.7.7.8"/>
    </reaction>
</comment>
<comment type="cofactor">
    <cofactor evidence="1">
        <name>Mg(2+)</name>
        <dbReference type="ChEBI" id="CHEBI:18420"/>
    </cofactor>
</comment>
<comment type="subcellular location">
    <subcellularLocation>
        <location evidence="1">Cytoplasm</location>
    </subcellularLocation>
</comment>
<comment type="similarity">
    <text evidence="1">Belongs to the polyribonucleotide nucleotidyltransferase family.</text>
</comment>
<gene>
    <name evidence="1" type="primary">pnp</name>
    <name type="ordered locus">Swit_3810</name>
</gene>
<reference key="1">
    <citation type="journal article" date="2010" name="J. Bacteriol.">
        <title>Genome sequence of the dioxin-mineralizing bacterium Sphingomonas wittichii RW1.</title>
        <authorList>
            <person name="Miller T.R."/>
            <person name="Delcher A.L."/>
            <person name="Salzberg S.L."/>
            <person name="Saunders E."/>
            <person name="Detter J.C."/>
            <person name="Halden R.U."/>
        </authorList>
    </citation>
    <scope>NUCLEOTIDE SEQUENCE [LARGE SCALE GENOMIC DNA]</scope>
    <source>
        <strain>DSM 6014 / CCUG 31198 / JCM 15750 / NBRC 105917 / EY 4224 / RW1</strain>
    </source>
</reference>
<sequence>MFDTKKVEIQWGGQTLTLETGRVARQADGAVLATLGETVVLCAVTAARSVKEGQDFFPLTVHYQEKYFSSGRIPGGFFKRERGATEKETLVSRLIDRPIRPLFPEGFYNEINVIAQVLSYDGENEPDILAMIAASAALTISGVPFMGPIGAARVGYKDGEYLLNPTDADVAAGDLDLVVAATHDAVMMVESEAKELSEEVMLGAVMFAHKASQDVIKAIIKLAEKSAKDPWEMAPQADLSAAKTKLKKLVGKDITAAYKLTNKSARSSALNEARAKAKEAFADATPQDQMAAIKLVKKLEAEIVRTAILKDGRRIDGRDTRTVRPIVAEAHFLPRAHGSALFTRGETQSISTCTLGTKESEQMIDGLNGLRYEHFMLHYNFPPYSVGEVGRFGAPGRREVGHGKLAWRALHAVLPTKEEFPYTIRLTSDITESNGSSSMATVCGGSLAMMDAGVPIKRPVSGIAMGLILEGKDFAVISDILGDEDHLGDMDFKVAGTSEGITTMQMDIKIAGITEEIFKTALLQAKEGRAHILGEMAKALDHTRTELSAHAPRIETMSVPKDKIRDIIGTGGKIIREIVATTGAKVDIDDDGTVKISSSDTAQIEAARNWIIGIVAEPEVGKIYTGKVVNLVDFGAFVNFMGGKDGLVHVSEIKNERVEKVADALSEGQEVKVKVLEIDNRGKVRLSMRVVDQETGEELPDTRPPREERPRGDRGDRGDRGPRRDGDRRREGGDRGPRRDRGDRGDRPRRERSEGGDEGPAPDFAPAFLTRDDD</sequence>
<proteinExistence type="inferred from homology"/>
<dbReference type="EC" id="2.7.7.8" evidence="1"/>
<dbReference type="EMBL" id="CP000699">
    <property type="protein sequence ID" value="ABQ70155.1"/>
    <property type="molecule type" value="Genomic_DNA"/>
</dbReference>
<dbReference type="SMR" id="A5VCY9"/>
<dbReference type="STRING" id="392499.Swit_3810"/>
<dbReference type="PaxDb" id="392499-Swit_3810"/>
<dbReference type="KEGG" id="swi:Swit_3810"/>
<dbReference type="eggNOG" id="COG1185">
    <property type="taxonomic scope" value="Bacteria"/>
</dbReference>
<dbReference type="HOGENOM" id="CLU_004217_2_2_5"/>
<dbReference type="OrthoDB" id="9804305at2"/>
<dbReference type="Proteomes" id="UP000001989">
    <property type="component" value="Chromosome"/>
</dbReference>
<dbReference type="GO" id="GO:0005829">
    <property type="term" value="C:cytosol"/>
    <property type="evidence" value="ECO:0007669"/>
    <property type="project" value="TreeGrafter"/>
</dbReference>
<dbReference type="GO" id="GO:0000175">
    <property type="term" value="F:3'-5'-RNA exonuclease activity"/>
    <property type="evidence" value="ECO:0007669"/>
    <property type="project" value="TreeGrafter"/>
</dbReference>
<dbReference type="GO" id="GO:0000287">
    <property type="term" value="F:magnesium ion binding"/>
    <property type="evidence" value="ECO:0007669"/>
    <property type="project" value="UniProtKB-UniRule"/>
</dbReference>
<dbReference type="GO" id="GO:0004654">
    <property type="term" value="F:polyribonucleotide nucleotidyltransferase activity"/>
    <property type="evidence" value="ECO:0007669"/>
    <property type="project" value="UniProtKB-UniRule"/>
</dbReference>
<dbReference type="GO" id="GO:0003723">
    <property type="term" value="F:RNA binding"/>
    <property type="evidence" value="ECO:0007669"/>
    <property type="project" value="UniProtKB-UniRule"/>
</dbReference>
<dbReference type="GO" id="GO:0006402">
    <property type="term" value="P:mRNA catabolic process"/>
    <property type="evidence" value="ECO:0007669"/>
    <property type="project" value="UniProtKB-UniRule"/>
</dbReference>
<dbReference type="GO" id="GO:0006396">
    <property type="term" value="P:RNA processing"/>
    <property type="evidence" value="ECO:0007669"/>
    <property type="project" value="InterPro"/>
</dbReference>
<dbReference type="CDD" id="cd02393">
    <property type="entry name" value="KH-I_PNPase"/>
    <property type="match status" value="1"/>
</dbReference>
<dbReference type="CDD" id="cd11363">
    <property type="entry name" value="RNase_PH_PNPase_1"/>
    <property type="match status" value="1"/>
</dbReference>
<dbReference type="CDD" id="cd11364">
    <property type="entry name" value="RNase_PH_PNPase_2"/>
    <property type="match status" value="1"/>
</dbReference>
<dbReference type="CDD" id="cd04472">
    <property type="entry name" value="S1_PNPase"/>
    <property type="match status" value="1"/>
</dbReference>
<dbReference type="FunFam" id="2.40.50.140:FF:000107">
    <property type="entry name" value="Polyribonucleotide nucleotidyltransferase"/>
    <property type="match status" value="1"/>
</dbReference>
<dbReference type="FunFam" id="3.30.1370.10:FF:000001">
    <property type="entry name" value="Polyribonucleotide nucleotidyltransferase"/>
    <property type="match status" value="1"/>
</dbReference>
<dbReference type="FunFam" id="3.30.230.70:FF:000001">
    <property type="entry name" value="Polyribonucleotide nucleotidyltransferase"/>
    <property type="match status" value="1"/>
</dbReference>
<dbReference type="FunFam" id="3.30.230.70:FF:000002">
    <property type="entry name" value="Polyribonucleotide nucleotidyltransferase"/>
    <property type="match status" value="1"/>
</dbReference>
<dbReference type="Gene3D" id="3.30.230.70">
    <property type="entry name" value="GHMP Kinase, N-terminal domain"/>
    <property type="match status" value="2"/>
</dbReference>
<dbReference type="Gene3D" id="3.30.1370.10">
    <property type="entry name" value="K Homology domain, type 1"/>
    <property type="match status" value="1"/>
</dbReference>
<dbReference type="Gene3D" id="2.40.50.140">
    <property type="entry name" value="Nucleic acid-binding proteins"/>
    <property type="match status" value="1"/>
</dbReference>
<dbReference type="HAMAP" id="MF_01595">
    <property type="entry name" value="PNPase"/>
    <property type="match status" value="1"/>
</dbReference>
<dbReference type="InterPro" id="IPR001247">
    <property type="entry name" value="ExoRNase_PH_dom1"/>
</dbReference>
<dbReference type="InterPro" id="IPR015847">
    <property type="entry name" value="ExoRNase_PH_dom2"/>
</dbReference>
<dbReference type="InterPro" id="IPR036345">
    <property type="entry name" value="ExoRNase_PH_dom2_sf"/>
</dbReference>
<dbReference type="InterPro" id="IPR004087">
    <property type="entry name" value="KH_dom"/>
</dbReference>
<dbReference type="InterPro" id="IPR004088">
    <property type="entry name" value="KH_dom_type_1"/>
</dbReference>
<dbReference type="InterPro" id="IPR036612">
    <property type="entry name" value="KH_dom_type_1_sf"/>
</dbReference>
<dbReference type="InterPro" id="IPR012340">
    <property type="entry name" value="NA-bd_OB-fold"/>
</dbReference>
<dbReference type="InterPro" id="IPR012162">
    <property type="entry name" value="PNPase"/>
</dbReference>
<dbReference type="InterPro" id="IPR027408">
    <property type="entry name" value="PNPase/RNase_PH_dom_sf"/>
</dbReference>
<dbReference type="InterPro" id="IPR015848">
    <property type="entry name" value="PNPase_PH_RNA-bd_bac/org-type"/>
</dbReference>
<dbReference type="InterPro" id="IPR036456">
    <property type="entry name" value="PNPase_PH_RNA-bd_sf"/>
</dbReference>
<dbReference type="InterPro" id="IPR020568">
    <property type="entry name" value="Ribosomal_Su5_D2-typ_SF"/>
</dbReference>
<dbReference type="InterPro" id="IPR003029">
    <property type="entry name" value="S1_domain"/>
</dbReference>
<dbReference type="NCBIfam" id="TIGR03591">
    <property type="entry name" value="polynuc_phos"/>
    <property type="match status" value="1"/>
</dbReference>
<dbReference type="NCBIfam" id="NF008805">
    <property type="entry name" value="PRK11824.1"/>
    <property type="match status" value="1"/>
</dbReference>
<dbReference type="PANTHER" id="PTHR11252">
    <property type="entry name" value="POLYRIBONUCLEOTIDE NUCLEOTIDYLTRANSFERASE"/>
    <property type="match status" value="1"/>
</dbReference>
<dbReference type="PANTHER" id="PTHR11252:SF0">
    <property type="entry name" value="POLYRIBONUCLEOTIDE NUCLEOTIDYLTRANSFERASE 1, MITOCHONDRIAL"/>
    <property type="match status" value="1"/>
</dbReference>
<dbReference type="Pfam" id="PF00013">
    <property type="entry name" value="KH_1"/>
    <property type="match status" value="1"/>
</dbReference>
<dbReference type="Pfam" id="PF03726">
    <property type="entry name" value="PNPase"/>
    <property type="match status" value="1"/>
</dbReference>
<dbReference type="Pfam" id="PF01138">
    <property type="entry name" value="RNase_PH"/>
    <property type="match status" value="2"/>
</dbReference>
<dbReference type="Pfam" id="PF03725">
    <property type="entry name" value="RNase_PH_C"/>
    <property type="match status" value="2"/>
</dbReference>
<dbReference type="Pfam" id="PF00575">
    <property type="entry name" value="S1"/>
    <property type="match status" value="1"/>
</dbReference>
<dbReference type="PIRSF" id="PIRSF005499">
    <property type="entry name" value="PNPase"/>
    <property type="match status" value="1"/>
</dbReference>
<dbReference type="SMART" id="SM00322">
    <property type="entry name" value="KH"/>
    <property type="match status" value="1"/>
</dbReference>
<dbReference type="SMART" id="SM00316">
    <property type="entry name" value="S1"/>
    <property type="match status" value="1"/>
</dbReference>
<dbReference type="SUPFAM" id="SSF54791">
    <property type="entry name" value="Eukaryotic type KH-domain (KH-domain type I)"/>
    <property type="match status" value="1"/>
</dbReference>
<dbReference type="SUPFAM" id="SSF50249">
    <property type="entry name" value="Nucleic acid-binding proteins"/>
    <property type="match status" value="1"/>
</dbReference>
<dbReference type="SUPFAM" id="SSF46915">
    <property type="entry name" value="Polynucleotide phosphorylase/guanosine pentaphosphate synthase (PNPase/GPSI), domain 3"/>
    <property type="match status" value="1"/>
</dbReference>
<dbReference type="SUPFAM" id="SSF55666">
    <property type="entry name" value="Ribonuclease PH domain 2-like"/>
    <property type="match status" value="2"/>
</dbReference>
<dbReference type="SUPFAM" id="SSF54211">
    <property type="entry name" value="Ribosomal protein S5 domain 2-like"/>
    <property type="match status" value="2"/>
</dbReference>
<dbReference type="PROSITE" id="PS50084">
    <property type="entry name" value="KH_TYPE_1"/>
    <property type="match status" value="1"/>
</dbReference>
<dbReference type="PROSITE" id="PS50126">
    <property type="entry name" value="S1"/>
    <property type="match status" value="1"/>
</dbReference>
<protein>
    <recommendedName>
        <fullName evidence="1">Polyribonucleotide nucleotidyltransferase</fullName>
        <ecNumber evidence="1">2.7.7.8</ecNumber>
    </recommendedName>
    <alternativeName>
        <fullName evidence="1">Polynucleotide phosphorylase</fullName>
        <shortName evidence="1">PNPase</shortName>
    </alternativeName>
</protein>
<name>PNP_RHIWR</name>
<accession>A5VCY9</accession>
<organism>
    <name type="scientific">Rhizorhabdus wittichii (strain DSM 6014 / CCUG 31198 / JCM 15750 / NBRC 105917 / EY 4224 / RW1)</name>
    <name type="common">Sphingomonas wittichii</name>
    <dbReference type="NCBI Taxonomy" id="392499"/>
    <lineage>
        <taxon>Bacteria</taxon>
        <taxon>Pseudomonadati</taxon>
        <taxon>Pseudomonadota</taxon>
        <taxon>Alphaproteobacteria</taxon>
        <taxon>Sphingomonadales</taxon>
        <taxon>Sphingomonadaceae</taxon>
        <taxon>Rhizorhabdus</taxon>
    </lineage>
</organism>